<dbReference type="EC" id="2.5.1.75" evidence="1"/>
<dbReference type="EMBL" id="AP009247">
    <property type="protein sequence ID" value="BAF61815.1"/>
    <property type="molecule type" value="Genomic_DNA"/>
</dbReference>
<dbReference type="RefSeq" id="WP_011930085.1">
    <property type="nucleotide sequence ID" value="NC_009465.1"/>
</dbReference>
<dbReference type="SMR" id="A5CW57"/>
<dbReference type="STRING" id="412965.COSY_0703"/>
<dbReference type="KEGG" id="vok:COSY_0703"/>
<dbReference type="eggNOG" id="COG0324">
    <property type="taxonomic scope" value="Bacteria"/>
</dbReference>
<dbReference type="HOGENOM" id="CLU_032616_0_0_6"/>
<dbReference type="OrthoDB" id="9776390at2"/>
<dbReference type="Proteomes" id="UP000000247">
    <property type="component" value="Chromosome"/>
</dbReference>
<dbReference type="GO" id="GO:0005524">
    <property type="term" value="F:ATP binding"/>
    <property type="evidence" value="ECO:0007669"/>
    <property type="project" value="UniProtKB-UniRule"/>
</dbReference>
<dbReference type="GO" id="GO:0052381">
    <property type="term" value="F:tRNA dimethylallyltransferase activity"/>
    <property type="evidence" value="ECO:0007669"/>
    <property type="project" value="UniProtKB-UniRule"/>
</dbReference>
<dbReference type="GO" id="GO:0006400">
    <property type="term" value="P:tRNA modification"/>
    <property type="evidence" value="ECO:0007669"/>
    <property type="project" value="TreeGrafter"/>
</dbReference>
<dbReference type="FunFam" id="1.10.20.140:FF:000001">
    <property type="entry name" value="tRNA dimethylallyltransferase"/>
    <property type="match status" value="1"/>
</dbReference>
<dbReference type="Gene3D" id="1.10.20.140">
    <property type="match status" value="1"/>
</dbReference>
<dbReference type="Gene3D" id="3.40.50.300">
    <property type="entry name" value="P-loop containing nucleotide triphosphate hydrolases"/>
    <property type="match status" value="1"/>
</dbReference>
<dbReference type="HAMAP" id="MF_00185">
    <property type="entry name" value="IPP_trans"/>
    <property type="match status" value="1"/>
</dbReference>
<dbReference type="InterPro" id="IPR039657">
    <property type="entry name" value="Dimethylallyltransferase"/>
</dbReference>
<dbReference type="InterPro" id="IPR018022">
    <property type="entry name" value="IPT"/>
</dbReference>
<dbReference type="InterPro" id="IPR027417">
    <property type="entry name" value="P-loop_NTPase"/>
</dbReference>
<dbReference type="NCBIfam" id="TIGR00174">
    <property type="entry name" value="miaA"/>
    <property type="match status" value="1"/>
</dbReference>
<dbReference type="PANTHER" id="PTHR11088">
    <property type="entry name" value="TRNA DIMETHYLALLYLTRANSFERASE"/>
    <property type="match status" value="1"/>
</dbReference>
<dbReference type="PANTHER" id="PTHR11088:SF60">
    <property type="entry name" value="TRNA DIMETHYLALLYLTRANSFERASE"/>
    <property type="match status" value="1"/>
</dbReference>
<dbReference type="Pfam" id="PF01715">
    <property type="entry name" value="IPPT"/>
    <property type="match status" value="1"/>
</dbReference>
<dbReference type="SUPFAM" id="SSF52540">
    <property type="entry name" value="P-loop containing nucleoside triphosphate hydrolases"/>
    <property type="match status" value="1"/>
</dbReference>
<organism>
    <name type="scientific">Vesicomyosocius okutanii subsp. Calyptogena okutanii (strain HA)</name>
    <dbReference type="NCBI Taxonomy" id="412965"/>
    <lineage>
        <taxon>Bacteria</taxon>
        <taxon>Pseudomonadati</taxon>
        <taxon>Pseudomonadota</taxon>
        <taxon>Gammaproteobacteria</taxon>
        <taxon>Candidatus Pseudothioglobaceae</taxon>
        <taxon>Candidatus Vesicomyosocius</taxon>
    </lineage>
</organism>
<sequence>MPIQINKTVIFLMGPTASGKTNLAIKLSQQFKTRLISVDSALIYKGMNIGTAKPDKATLKKYPHYLINICSPESSYSVFDFIRDANKQIKTAFAKNELPILVGGTSFYFHVLEHGLSNLPESSTKSKEKFNQLLRNKGTIKLHQDLKKIDPQAANKIHPNDSQRIIRALEVFNLSGKTISELQGNKKPIIDYPIKKIILMPKRNELHTKIETRFLLMMKNGFLNEVQHLKQNPNLHQNLSSIRCVGYRQAWQYLNGKIDKTEMIEKIIIATRQLCKRQITWLKSEKYALVLNNSNLAKAVTFINS</sequence>
<comment type="function">
    <text evidence="1">Catalyzes the transfer of a dimethylallyl group onto the adenine at position 37 in tRNAs that read codons beginning with uridine, leading to the formation of N6-(dimethylallyl)adenosine (i(6)A).</text>
</comment>
<comment type="catalytic activity">
    <reaction evidence="1">
        <text>adenosine(37) in tRNA + dimethylallyl diphosphate = N(6)-dimethylallyladenosine(37) in tRNA + diphosphate</text>
        <dbReference type="Rhea" id="RHEA:26482"/>
        <dbReference type="Rhea" id="RHEA-COMP:10162"/>
        <dbReference type="Rhea" id="RHEA-COMP:10375"/>
        <dbReference type="ChEBI" id="CHEBI:33019"/>
        <dbReference type="ChEBI" id="CHEBI:57623"/>
        <dbReference type="ChEBI" id="CHEBI:74411"/>
        <dbReference type="ChEBI" id="CHEBI:74415"/>
        <dbReference type="EC" id="2.5.1.75"/>
    </reaction>
</comment>
<comment type="cofactor">
    <cofactor evidence="1">
        <name>Mg(2+)</name>
        <dbReference type="ChEBI" id="CHEBI:18420"/>
    </cofactor>
</comment>
<comment type="subunit">
    <text evidence="1">Monomer.</text>
</comment>
<comment type="similarity">
    <text evidence="1">Belongs to the IPP transferase family.</text>
</comment>
<proteinExistence type="inferred from homology"/>
<protein>
    <recommendedName>
        <fullName evidence="1">tRNA dimethylallyltransferase</fullName>
        <ecNumber evidence="1">2.5.1.75</ecNumber>
    </recommendedName>
    <alternativeName>
        <fullName evidence="1">Dimethylallyl diphosphate:tRNA dimethylallyltransferase</fullName>
        <shortName evidence="1">DMAPP:tRNA dimethylallyltransferase</shortName>
        <shortName evidence="1">DMATase</shortName>
    </alternativeName>
    <alternativeName>
        <fullName evidence="1">Isopentenyl-diphosphate:tRNA isopentenyltransferase</fullName>
        <shortName evidence="1">IPP transferase</shortName>
        <shortName evidence="1">IPPT</shortName>
        <shortName evidence="1">IPTase</shortName>
    </alternativeName>
</protein>
<reference key="1">
    <citation type="journal article" date="2007" name="Curr. Biol.">
        <title>Reduced genome of the thioautotrophic intracellular symbiont in a deep-sea clam, Calyptogena okutanii.</title>
        <authorList>
            <person name="Kuwahara H."/>
            <person name="Yoshida T."/>
            <person name="Takaki Y."/>
            <person name="Shimamura S."/>
            <person name="Nishi S."/>
            <person name="Harada M."/>
            <person name="Matsuyama K."/>
            <person name="Takishita K."/>
            <person name="Kawato M."/>
            <person name="Uematsu K."/>
            <person name="Fujiwara Y."/>
            <person name="Sato T."/>
            <person name="Kato C."/>
            <person name="Kitagawa M."/>
            <person name="Kato I."/>
            <person name="Maruyama T."/>
        </authorList>
    </citation>
    <scope>NUCLEOTIDE SEQUENCE [LARGE SCALE GENOMIC DNA]</scope>
    <source>
        <strain>HA</strain>
    </source>
</reference>
<gene>
    <name evidence="1" type="primary">miaA</name>
    <name type="ordered locus">COSY_0703</name>
</gene>
<accession>A5CW57</accession>
<name>MIAA_VESOH</name>
<keyword id="KW-0067">ATP-binding</keyword>
<keyword id="KW-0460">Magnesium</keyword>
<keyword id="KW-0547">Nucleotide-binding</keyword>
<keyword id="KW-1185">Reference proteome</keyword>
<keyword id="KW-0808">Transferase</keyword>
<keyword id="KW-0819">tRNA processing</keyword>
<feature type="chain" id="PRO_0000377366" description="tRNA dimethylallyltransferase">
    <location>
        <begin position="1"/>
        <end position="305"/>
    </location>
</feature>
<feature type="region of interest" description="Interaction with substrate tRNA" evidence="1">
    <location>
        <begin position="39"/>
        <end position="42"/>
    </location>
</feature>
<feature type="region of interest" description="Interaction with substrate tRNA" evidence="1">
    <location>
        <begin position="163"/>
        <end position="167"/>
    </location>
</feature>
<feature type="region of interest" description="Interaction with substrate tRNA" evidence="1">
    <location>
        <begin position="243"/>
        <end position="248"/>
    </location>
</feature>
<feature type="binding site" evidence="1">
    <location>
        <begin position="14"/>
        <end position="21"/>
    </location>
    <ligand>
        <name>ATP</name>
        <dbReference type="ChEBI" id="CHEBI:30616"/>
    </ligand>
</feature>
<feature type="binding site" evidence="1">
    <location>
        <begin position="16"/>
        <end position="21"/>
    </location>
    <ligand>
        <name>substrate</name>
    </ligand>
</feature>
<feature type="site" description="Interaction with substrate tRNA" evidence="1">
    <location>
        <position position="105"/>
    </location>
</feature>
<evidence type="ECO:0000255" key="1">
    <source>
        <dbReference type="HAMAP-Rule" id="MF_00185"/>
    </source>
</evidence>